<protein>
    <recommendedName>
        <fullName evidence="1">Phosphoribosylaminoimidazole-succinocarboxamide synthase</fullName>
        <ecNumber evidence="1">6.3.2.6</ecNumber>
    </recommendedName>
    <alternativeName>
        <fullName evidence="1">SAICAR synthetase</fullName>
    </alternativeName>
</protein>
<proteinExistence type="inferred from homology"/>
<dbReference type="EC" id="6.3.2.6" evidence="1"/>
<dbReference type="EMBL" id="CP000082">
    <property type="protein sequence ID" value="AAZ18024.1"/>
    <property type="molecule type" value="Genomic_DNA"/>
</dbReference>
<dbReference type="RefSeq" id="WP_011279463.1">
    <property type="nucleotide sequence ID" value="NC_007204.1"/>
</dbReference>
<dbReference type="SMR" id="Q4FVD4"/>
<dbReference type="STRING" id="259536.Psyc_0150"/>
<dbReference type="KEGG" id="par:Psyc_0150"/>
<dbReference type="eggNOG" id="COG0152">
    <property type="taxonomic scope" value="Bacteria"/>
</dbReference>
<dbReference type="HOGENOM" id="CLU_061495_2_0_6"/>
<dbReference type="OrthoDB" id="9801549at2"/>
<dbReference type="UniPathway" id="UPA00074">
    <property type="reaction ID" value="UER00131"/>
</dbReference>
<dbReference type="Proteomes" id="UP000000546">
    <property type="component" value="Chromosome"/>
</dbReference>
<dbReference type="GO" id="GO:0005829">
    <property type="term" value="C:cytosol"/>
    <property type="evidence" value="ECO:0007669"/>
    <property type="project" value="TreeGrafter"/>
</dbReference>
<dbReference type="GO" id="GO:0005524">
    <property type="term" value="F:ATP binding"/>
    <property type="evidence" value="ECO:0007669"/>
    <property type="project" value="UniProtKB-KW"/>
</dbReference>
<dbReference type="GO" id="GO:0004639">
    <property type="term" value="F:phosphoribosylaminoimidazolesuccinocarboxamide synthase activity"/>
    <property type="evidence" value="ECO:0007669"/>
    <property type="project" value="UniProtKB-UniRule"/>
</dbReference>
<dbReference type="GO" id="GO:0006189">
    <property type="term" value="P:'de novo' IMP biosynthetic process"/>
    <property type="evidence" value="ECO:0007669"/>
    <property type="project" value="UniProtKB-UniRule"/>
</dbReference>
<dbReference type="GO" id="GO:0009236">
    <property type="term" value="P:cobalamin biosynthetic process"/>
    <property type="evidence" value="ECO:0007669"/>
    <property type="project" value="InterPro"/>
</dbReference>
<dbReference type="CDD" id="cd01415">
    <property type="entry name" value="SAICAR_synt_PurC"/>
    <property type="match status" value="1"/>
</dbReference>
<dbReference type="FunFam" id="3.30.200.20:FF:000086">
    <property type="entry name" value="Phosphoribosylaminoimidazole-succinocarboxamide synthase"/>
    <property type="match status" value="1"/>
</dbReference>
<dbReference type="FunFam" id="3.30.470.20:FF:000006">
    <property type="entry name" value="Phosphoribosylaminoimidazole-succinocarboxamide synthase"/>
    <property type="match status" value="1"/>
</dbReference>
<dbReference type="Gene3D" id="3.30.470.20">
    <property type="entry name" value="ATP-grasp fold, B domain"/>
    <property type="match status" value="1"/>
</dbReference>
<dbReference type="Gene3D" id="3.30.200.20">
    <property type="entry name" value="Phosphorylase Kinase, domain 1"/>
    <property type="match status" value="1"/>
</dbReference>
<dbReference type="HAMAP" id="MF_00137">
    <property type="entry name" value="SAICAR_synth"/>
    <property type="match status" value="1"/>
</dbReference>
<dbReference type="InterPro" id="IPR028923">
    <property type="entry name" value="SAICAR_synt/ADE2_N"/>
</dbReference>
<dbReference type="InterPro" id="IPR033934">
    <property type="entry name" value="SAICAR_synt_PurC"/>
</dbReference>
<dbReference type="InterPro" id="IPR001636">
    <property type="entry name" value="SAICAR_synth"/>
</dbReference>
<dbReference type="InterPro" id="IPR050089">
    <property type="entry name" value="SAICAR_synthetase"/>
</dbReference>
<dbReference type="InterPro" id="IPR018236">
    <property type="entry name" value="SAICAR_synthetase_CS"/>
</dbReference>
<dbReference type="NCBIfam" id="TIGR00081">
    <property type="entry name" value="purC"/>
    <property type="match status" value="1"/>
</dbReference>
<dbReference type="PANTHER" id="PTHR43599">
    <property type="entry name" value="MULTIFUNCTIONAL PROTEIN ADE2"/>
    <property type="match status" value="1"/>
</dbReference>
<dbReference type="PANTHER" id="PTHR43599:SF3">
    <property type="entry name" value="SI:DKEY-6E2.2"/>
    <property type="match status" value="1"/>
</dbReference>
<dbReference type="Pfam" id="PF01259">
    <property type="entry name" value="SAICAR_synt"/>
    <property type="match status" value="1"/>
</dbReference>
<dbReference type="SUPFAM" id="SSF56104">
    <property type="entry name" value="SAICAR synthase-like"/>
    <property type="match status" value="1"/>
</dbReference>
<dbReference type="PROSITE" id="PS01057">
    <property type="entry name" value="SAICAR_SYNTHETASE_1"/>
    <property type="match status" value="1"/>
</dbReference>
<dbReference type="PROSITE" id="PS01058">
    <property type="entry name" value="SAICAR_SYNTHETASE_2"/>
    <property type="match status" value="1"/>
</dbReference>
<organism>
    <name type="scientific">Psychrobacter arcticus (strain DSM 17307 / VKM B-2377 / 273-4)</name>
    <dbReference type="NCBI Taxonomy" id="259536"/>
    <lineage>
        <taxon>Bacteria</taxon>
        <taxon>Pseudomonadati</taxon>
        <taxon>Pseudomonadota</taxon>
        <taxon>Gammaproteobacteria</taxon>
        <taxon>Moraxellales</taxon>
        <taxon>Moraxellaceae</taxon>
        <taxon>Psychrobacter</taxon>
    </lineage>
</organism>
<sequence>MQKQEMLYKGKAKSVYETEDNDLLILHFRDDTSALDGKRIEQLARKGVVNNRFNAFIMQKLADAGIETHFEKQLSDDEVLVKRLDMIPVECVVRNFAAGSLVRRLGLEEGQALTPPTYELFYKDDALGDPMVNESISISLGWATDAQLAKMKELSHQVNEVLTALFDAGDLILVDFKLEFGVFHDRIILGDEFSPDGCRIWDKATKKKLDKDRFRQSLGDVIEAYEEVASRIGVPLS</sequence>
<feature type="chain" id="PRO_1000018762" description="Phosphoribosylaminoimidazole-succinocarboxamide synthase">
    <location>
        <begin position="1"/>
        <end position="237"/>
    </location>
</feature>
<accession>Q4FVD4</accession>
<evidence type="ECO:0000255" key="1">
    <source>
        <dbReference type="HAMAP-Rule" id="MF_00137"/>
    </source>
</evidence>
<keyword id="KW-0067">ATP-binding</keyword>
<keyword id="KW-0436">Ligase</keyword>
<keyword id="KW-0547">Nucleotide-binding</keyword>
<keyword id="KW-0658">Purine biosynthesis</keyword>
<keyword id="KW-1185">Reference proteome</keyword>
<gene>
    <name evidence="1" type="primary">purC</name>
    <name type="ordered locus">Psyc_0150</name>
</gene>
<reference key="1">
    <citation type="journal article" date="2010" name="Appl. Environ. Microbiol.">
        <title>The genome sequence of Psychrobacter arcticus 273-4, a psychroactive Siberian permafrost bacterium, reveals mechanisms for adaptation to low-temperature growth.</title>
        <authorList>
            <person name="Ayala-del-Rio H.L."/>
            <person name="Chain P.S."/>
            <person name="Grzymski J.J."/>
            <person name="Ponder M.A."/>
            <person name="Ivanova N."/>
            <person name="Bergholz P.W."/>
            <person name="Di Bartolo G."/>
            <person name="Hauser L."/>
            <person name="Land M."/>
            <person name="Bakermans C."/>
            <person name="Rodrigues D."/>
            <person name="Klappenbach J."/>
            <person name="Zarka D."/>
            <person name="Larimer F."/>
            <person name="Richardson P."/>
            <person name="Murray A."/>
            <person name="Thomashow M."/>
            <person name="Tiedje J.M."/>
        </authorList>
    </citation>
    <scope>NUCLEOTIDE SEQUENCE [LARGE SCALE GENOMIC DNA]</scope>
    <source>
        <strain>DSM 17307 / VKM B-2377 / 273-4</strain>
    </source>
</reference>
<comment type="catalytic activity">
    <reaction evidence="1">
        <text>5-amino-1-(5-phospho-D-ribosyl)imidazole-4-carboxylate + L-aspartate + ATP = (2S)-2-[5-amino-1-(5-phospho-beta-D-ribosyl)imidazole-4-carboxamido]succinate + ADP + phosphate + 2 H(+)</text>
        <dbReference type="Rhea" id="RHEA:22628"/>
        <dbReference type="ChEBI" id="CHEBI:15378"/>
        <dbReference type="ChEBI" id="CHEBI:29991"/>
        <dbReference type="ChEBI" id="CHEBI:30616"/>
        <dbReference type="ChEBI" id="CHEBI:43474"/>
        <dbReference type="ChEBI" id="CHEBI:58443"/>
        <dbReference type="ChEBI" id="CHEBI:77657"/>
        <dbReference type="ChEBI" id="CHEBI:456216"/>
        <dbReference type="EC" id="6.3.2.6"/>
    </reaction>
</comment>
<comment type="pathway">
    <text evidence="1">Purine metabolism; IMP biosynthesis via de novo pathway; 5-amino-1-(5-phospho-D-ribosyl)imidazole-4-carboxamide from 5-amino-1-(5-phospho-D-ribosyl)imidazole-4-carboxylate: step 1/2.</text>
</comment>
<comment type="similarity">
    <text evidence="1">Belongs to the SAICAR synthetase family.</text>
</comment>
<name>PUR7_PSYA2</name>